<accession>Q8HY87</accession>
<organism>
    <name type="scientific">Macaca fascicularis</name>
    <name type="common">Crab-eating macaque</name>
    <name type="synonym">Cynomolgus monkey</name>
    <dbReference type="NCBI Taxonomy" id="9541"/>
    <lineage>
        <taxon>Eukaryota</taxon>
        <taxon>Metazoa</taxon>
        <taxon>Chordata</taxon>
        <taxon>Craniata</taxon>
        <taxon>Vertebrata</taxon>
        <taxon>Euteleostomi</taxon>
        <taxon>Mammalia</taxon>
        <taxon>Eutheria</taxon>
        <taxon>Euarchontoglires</taxon>
        <taxon>Primates</taxon>
        <taxon>Haplorrhini</taxon>
        <taxon>Catarrhini</taxon>
        <taxon>Cercopithecidae</taxon>
        <taxon>Cercopithecinae</taxon>
        <taxon>Macaca</taxon>
    </lineage>
</organism>
<reference key="1">
    <citation type="journal article" date="2004" name="Biochim. Biophys. Acta">
        <title>Structure of primate and rodent orthologs of the prostate cancer susceptibility gene ELAC2.</title>
        <authorList>
            <person name="Dumont M."/>
            <person name="Frank D."/>
            <person name="Moisan A.-M."/>
            <person name="Tranchant M."/>
            <person name="Soucy P."/>
            <person name="Breton R."/>
            <person name="Labrie F."/>
            <person name="Tavtigian S.V."/>
            <person name="Simard J."/>
        </authorList>
    </citation>
    <scope>NUCLEOTIDE SEQUENCE [MRNA]</scope>
</reference>
<name>RNZ2_MACFA</name>
<keyword id="KW-0255">Endonuclease</keyword>
<keyword id="KW-0378">Hydrolase</keyword>
<keyword id="KW-0479">Metal-binding</keyword>
<keyword id="KW-0496">Mitochondrion</keyword>
<keyword id="KW-1135">Mitochondrion nucleoid</keyword>
<keyword id="KW-0540">Nuclease</keyword>
<keyword id="KW-0539">Nucleus</keyword>
<keyword id="KW-0597">Phosphoprotein</keyword>
<keyword id="KW-1185">Reference proteome</keyword>
<keyword id="KW-0809">Transit peptide</keyword>
<keyword id="KW-0819">tRNA processing</keyword>
<keyword id="KW-0862">Zinc</keyword>
<sequence>MWALCSLLRSATGRTMSQGRTISQGSARRQRPPKDPLRHLRTREKRGPSGSSGGANTVYLQVVAVGSRDAGAALYVFSEFNRYLFNCGEGVQRLMQEHKLKVARLDNIFLTRMHWSNVGGLSGMILTLKETGLPKCVLSGPPQLEKYLEAIKIFSGPLKGIELAVRPHSAPEYKDETMTVYQIPIHSEQRSGKHQPWQSPERPLGRLSPERSSDSESNESEPHLPRGVSQRRGVRDPSLVVAFICKLHLKRGSFLVLKAKELGLPVGTAAIAPIIAAVKDGKSITHEGREILAEELCTPPDPGAAFVVVECPDEGFIQPICENATFQRYQGKADAPVALVVHMAPESVLADSRYQQWMERFGPDTQHLVLNENCASVHNLRSYKIQTQLNLIHPDIFPLLTSFPRKKEGPTLSVPVVQGECLLKYQLRPRREWQRDAIITCNPEEFIDEALQLPNFQESMQEYRRSAQDGPAPAEKRSQYPEIVFLGTGSAVPMKTRNVSATLVNISPDTSLLLDCGEGTFGQLYRHYGDQVDRVLGSLAAVFVSHLHADHHTGLLNILLQRERALASLGKPFHPLLVVAPTQLKAWLQQYHNQCQEVLHHVSMIPAKYLQVGAEISSPAVERLISSLLRTCDLEEFQTCLVRHCRHAFGCALVHTSGWKVVYSGDTMPCEALVQMGKDATLLIHEATLEDGLEEEAVEKTHSTTSQAIRVGMRMNAEFIMLNHFSQRYAKVPLFSPDFNEKVGIAFDHMKVSFGDFPTVPKLIPPLKALFAGDIEEMEERREKRELRQVRAALLSRALTDDLEDGEPQQKRAHTEEPQSKKVRAQ</sequence>
<evidence type="ECO:0000250" key="1"/>
<evidence type="ECO:0000250" key="2">
    <source>
        <dbReference type="UniProtKB" id="Q9BQ52"/>
    </source>
</evidence>
<evidence type="ECO:0000255" key="3"/>
<evidence type="ECO:0000256" key="4">
    <source>
        <dbReference type="SAM" id="MobiDB-lite"/>
    </source>
</evidence>
<evidence type="ECO:0000305" key="5"/>
<feature type="transit peptide" description="Mitochondrion" evidence="3">
    <location>
        <begin position="1"/>
        <end position="16"/>
    </location>
</feature>
<feature type="chain" id="PRO_0000155829" description="Zinc phosphodiesterase ELAC protein 2">
    <location>
        <begin position="17"/>
        <end position="826"/>
    </location>
</feature>
<feature type="region of interest" description="Disordered" evidence="4">
    <location>
        <begin position="15"/>
        <end position="53"/>
    </location>
</feature>
<feature type="region of interest" description="Disordered" evidence="4">
    <location>
        <begin position="187"/>
        <end position="231"/>
    </location>
</feature>
<feature type="region of interest" description="Disordered" evidence="4">
    <location>
        <begin position="798"/>
        <end position="826"/>
    </location>
</feature>
<feature type="compositionally biased region" description="Polar residues" evidence="4">
    <location>
        <begin position="15"/>
        <end position="27"/>
    </location>
</feature>
<feature type="compositionally biased region" description="Basic and acidic residues" evidence="4">
    <location>
        <begin position="208"/>
        <end position="224"/>
    </location>
</feature>
<feature type="compositionally biased region" description="Basic and acidic residues" evidence="4">
    <location>
        <begin position="808"/>
        <end position="820"/>
    </location>
</feature>
<feature type="modified residue" description="Phosphoserine" evidence="2">
    <location>
        <position position="199"/>
    </location>
</feature>
<feature type="modified residue" description="Phosphoserine" evidence="2">
    <location>
        <position position="208"/>
    </location>
</feature>
<feature type="modified residue" description="Phosphoserine" evidence="2">
    <location>
        <position position="212"/>
    </location>
</feature>
<feature type="modified residue" description="Phosphoserine" evidence="2">
    <location>
        <position position="229"/>
    </location>
</feature>
<feature type="modified residue" description="Phosphoserine" evidence="2">
    <location>
        <position position="618"/>
    </location>
</feature>
<feature type="modified residue" description="Phosphoserine" evidence="2">
    <location>
        <position position="736"/>
    </location>
</feature>
<dbReference type="EC" id="3.1.26.11"/>
<dbReference type="EMBL" id="AY149903">
    <property type="protein sequence ID" value="AAN75377.1"/>
    <property type="molecule type" value="mRNA"/>
</dbReference>
<dbReference type="RefSeq" id="NP_001306341.1">
    <property type="nucleotide sequence ID" value="NM_001319412.1"/>
</dbReference>
<dbReference type="SMR" id="Q8HY87"/>
<dbReference type="STRING" id="9541.ENSMFAP00000029315"/>
<dbReference type="eggNOG" id="KOG2121">
    <property type="taxonomic scope" value="Eukaryota"/>
</dbReference>
<dbReference type="Proteomes" id="UP000233100">
    <property type="component" value="Unplaced"/>
</dbReference>
<dbReference type="GO" id="GO:0042645">
    <property type="term" value="C:mitochondrial nucleoid"/>
    <property type="evidence" value="ECO:0000250"/>
    <property type="project" value="UniProtKB"/>
</dbReference>
<dbReference type="GO" id="GO:0005739">
    <property type="term" value="C:mitochondrion"/>
    <property type="evidence" value="ECO:0000250"/>
    <property type="project" value="UniProtKB"/>
</dbReference>
<dbReference type="GO" id="GO:0005634">
    <property type="term" value="C:nucleus"/>
    <property type="evidence" value="ECO:0000250"/>
    <property type="project" value="UniProtKB"/>
</dbReference>
<dbReference type="GO" id="GO:0042781">
    <property type="term" value="F:3'-tRNA processing endoribonuclease activity"/>
    <property type="evidence" value="ECO:0007669"/>
    <property type="project" value="UniProtKB-EC"/>
</dbReference>
<dbReference type="GO" id="GO:0046872">
    <property type="term" value="F:metal ion binding"/>
    <property type="evidence" value="ECO:0007669"/>
    <property type="project" value="UniProtKB-KW"/>
</dbReference>
<dbReference type="GO" id="GO:1990180">
    <property type="term" value="P:mitochondrial tRNA 3'-end processing"/>
    <property type="evidence" value="ECO:0000250"/>
    <property type="project" value="UniProtKB"/>
</dbReference>
<dbReference type="CDD" id="cd07718">
    <property type="entry name" value="RNaseZ_ELAC1_ELAC2-C-term-like_MBL-fold"/>
    <property type="match status" value="1"/>
</dbReference>
<dbReference type="CDD" id="cd16296">
    <property type="entry name" value="RNaseZ_ELAC2-N-term-like_MBL-fold"/>
    <property type="match status" value="1"/>
</dbReference>
<dbReference type="FunFam" id="3.60.15.10:FF:000014">
    <property type="entry name" value="Zinc phosphodiesterase ELAC protein 2"/>
    <property type="match status" value="1"/>
</dbReference>
<dbReference type="Gene3D" id="3.60.15.10">
    <property type="entry name" value="Ribonuclease Z/Hydroxyacylglutathione hydrolase-like"/>
    <property type="match status" value="2"/>
</dbReference>
<dbReference type="InterPro" id="IPR001279">
    <property type="entry name" value="Metallo-B-lactamas"/>
</dbReference>
<dbReference type="InterPro" id="IPR036866">
    <property type="entry name" value="RibonucZ/Hydroxyglut_hydro"/>
</dbReference>
<dbReference type="InterPro" id="IPR047151">
    <property type="entry name" value="RNZ2-like"/>
</dbReference>
<dbReference type="InterPro" id="IPR027794">
    <property type="entry name" value="tRNase_Z_dom"/>
</dbReference>
<dbReference type="PANTHER" id="PTHR12553">
    <property type="entry name" value="ZINC PHOSPHODIESTERASE ELAC PROTEIN 2"/>
    <property type="match status" value="1"/>
</dbReference>
<dbReference type="PANTHER" id="PTHR12553:SF49">
    <property type="entry name" value="ZINC PHOSPHODIESTERASE ELAC PROTEIN 2"/>
    <property type="match status" value="1"/>
</dbReference>
<dbReference type="Pfam" id="PF12706">
    <property type="entry name" value="Lactamase_B_2"/>
    <property type="match status" value="1"/>
</dbReference>
<dbReference type="Pfam" id="PF13691">
    <property type="entry name" value="Lactamase_B_4"/>
    <property type="match status" value="1"/>
</dbReference>
<dbReference type="SMART" id="SM00849">
    <property type="entry name" value="Lactamase_B"/>
    <property type="match status" value="1"/>
</dbReference>
<dbReference type="SUPFAM" id="SSF56281">
    <property type="entry name" value="Metallo-hydrolase/oxidoreductase"/>
    <property type="match status" value="2"/>
</dbReference>
<proteinExistence type="evidence at transcript level"/>
<protein>
    <recommendedName>
        <fullName>Zinc phosphodiesterase ELAC protein 2</fullName>
        <ecNumber>3.1.26.11</ecNumber>
    </recommendedName>
    <alternativeName>
        <fullName>ElaC homolog protein 2</fullName>
    </alternativeName>
    <alternativeName>
        <fullName>Ribonuclease Z 2</fullName>
        <shortName>RNase Z 2</shortName>
    </alternativeName>
    <alternativeName>
        <fullName>tRNA 3 endonuclease 2</fullName>
    </alternativeName>
    <alternativeName>
        <fullName>tRNase Z 2</fullName>
    </alternativeName>
</protein>
<comment type="function">
    <text evidence="2">Zinc phosphodiesterase, which displays mitochondrial tRNA 3'-processing endonuclease activity. Involved in tRNA maturation, by removing a 3'-trailer from precursor tRNA. Associates with mitochondrial DNA complexes at the nucleoids to initiate RNA processing and ribosome assembly.</text>
</comment>
<comment type="catalytic activity">
    <reaction evidence="2">
        <text>Endonucleolytic cleavage of RNA, removing extra 3' nucleotides from tRNA precursor, generating 3' termini of tRNAs. A 3'-hydroxy group is left at the tRNA terminus and a 5'-phosphoryl group is left at the trailer molecule.</text>
        <dbReference type="EC" id="3.1.26.11"/>
    </reaction>
</comment>
<comment type="cofactor">
    <cofactor evidence="5">
        <name>Zn(2+)</name>
        <dbReference type="ChEBI" id="CHEBI:29105"/>
    </cofactor>
</comment>
<comment type="subunit">
    <text evidence="1">Homodimer. Interacts with PTCD1.</text>
</comment>
<comment type="subcellular location">
    <subcellularLocation>
        <location evidence="2">Mitochondrion</location>
    </subcellularLocation>
    <subcellularLocation>
        <location evidence="2">Mitochondrion matrix</location>
        <location evidence="2">Mitochondrion nucleoid</location>
    </subcellularLocation>
    <subcellularLocation>
        <location evidence="2">Nucleus</location>
    </subcellularLocation>
    <text evidence="2">Mainly mitochondrial.</text>
</comment>
<comment type="similarity">
    <text evidence="5">Belongs to the RNase Z family.</text>
</comment>
<gene>
    <name type="primary">ELAC2</name>
</gene>